<name>TILS_PSYWF</name>
<proteinExistence type="inferred from homology"/>
<reference key="1">
    <citation type="submission" date="2007-05" db="EMBL/GenBank/DDBJ databases">
        <title>Complete sequence of chromosome of Psychrobacter sp. PRwf-1.</title>
        <authorList>
            <consortium name="US DOE Joint Genome Institute"/>
            <person name="Copeland A."/>
            <person name="Lucas S."/>
            <person name="Lapidus A."/>
            <person name="Barry K."/>
            <person name="Detter J.C."/>
            <person name="Glavina del Rio T."/>
            <person name="Hammon N."/>
            <person name="Israni S."/>
            <person name="Dalin E."/>
            <person name="Tice H."/>
            <person name="Pitluck S."/>
            <person name="Chain P."/>
            <person name="Malfatti S."/>
            <person name="Shin M."/>
            <person name="Vergez L."/>
            <person name="Schmutz J."/>
            <person name="Larimer F."/>
            <person name="Land M."/>
            <person name="Hauser L."/>
            <person name="Kyrpides N."/>
            <person name="Kim E."/>
            <person name="Tiedje J."/>
            <person name="Richardson P."/>
        </authorList>
    </citation>
    <scope>NUCLEOTIDE SEQUENCE [LARGE SCALE GENOMIC DNA]</scope>
    <source>
        <strain>PRwf-1</strain>
    </source>
</reference>
<sequence length="525" mass="59124">MTTPVCISQAFMDSFHAHHAQLLGKRVWLACSGGRDSLGLALLCRTLFDQGRLPFLPQLIHVNHGMQAANDEWAQQVAQWAQQHDMACQIIGLNLTHKSEQAARDGRYQAMMQLMNQDDVLILGHHQDDQVETLLMRLFNGAGVTGLGAMREWTSKQAHTAQSPPDVNKPRQRIFLWRPWLEISRDQITEYAQRHNLKYIDDPTNVAQSPSKLALQTLNDRAWLRSVLLPHITERYPQASEAMARTAQLMQQASDSIDEQVTQDLAQVALAATEQQSVIALDKLAGLSAPRQAALIHHWLAPYPNQLPPSKRLVDEVLALSFRQDSNHQTCLYFDAGSEQYQVRRYQNKLYRLQHAYAQWLQMMPHQIHLPLAHNAEELSLNLADTDVLSLKQSGLEFDWQLTGVRGLMAHLARLLNSADAKVTPCQLIFEPLPRTIKLALAGRSGRKSGKKLLQALDQPSFMRGSVVLCRLDMMGSDGILQDSSTAVPLFIICIDRIWVLQSQFTALINQLLATEVLSTQILEC</sequence>
<dbReference type="EC" id="6.3.4.19" evidence="1"/>
<dbReference type="EMBL" id="CP000713">
    <property type="protein sequence ID" value="ABQ93291.1"/>
    <property type="molecule type" value="Genomic_DNA"/>
</dbReference>
<dbReference type="SMR" id="A5WCA0"/>
<dbReference type="STRING" id="349106.PsycPRwf_0336"/>
<dbReference type="KEGG" id="prw:PsycPRwf_0336"/>
<dbReference type="eggNOG" id="COG0037">
    <property type="taxonomic scope" value="Bacteria"/>
</dbReference>
<dbReference type="HOGENOM" id="CLU_018869_2_0_6"/>
<dbReference type="GO" id="GO:0005737">
    <property type="term" value="C:cytoplasm"/>
    <property type="evidence" value="ECO:0007669"/>
    <property type="project" value="UniProtKB-SubCell"/>
</dbReference>
<dbReference type="GO" id="GO:0005524">
    <property type="term" value="F:ATP binding"/>
    <property type="evidence" value="ECO:0007669"/>
    <property type="project" value="UniProtKB-UniRule"/>
</dbReference>
<dbReference type="GO" id="GO:0032267">
    <property type="term" value="F:tRNA(Ile)-lysidine synthase activity"/>
    <property type="evidence" value="ECO:0007669"/>
    <property type="project" value="UniProtKB-EC"/>
</dbReference>
<dbReference type="GO" id="GO:0006400">
    <property type="term" value="P:tRNA modification"/>
    <property type="evidence" value="ECO:0007669"/>
    <property type="project" value="UniProtKB-UniRule"/>
</dbReference>
<dbReference type="CDD" id="cd01992">
    <property type="entry name" value="TilS_N"/>
    <property type="match status" value="1"/>
</dbReference>
<dbReference type="Gene3D" id="1.20.59.20">
    <property type="match status" value="1"/>
</dbReference>
<dbReference type="Gene3D" id="3.40.50.620">
    <property type="entry name" value="HUPs"/>
    <property type="match status" value="1"/>
</dbReference>
<dbReference type="HAMAP" id="MF_01161">
    <property type="entry name" value="tRNA_Ile_lys_synt"/>
    <property type="match status" value="1"/>
</dbReference>
<dbReference type="InterPro" id="IPR014729">
    <property type="entry name" value="Rossmann-like_a/b/a_fold"/>
</dbReference>
<dbReference type="InterPro" id="IPR011063">
    <property type="entry name" value="TilS/TtcA_N"/>
</dbReference>
<dbReference type="InterPro" id="IPR012094">
    <property type="entry name" value="tRNA_Ile_lys_synt"/>
</dbReference>
<dbReference type="InterPro" id="IPR012795">
    <property type="entry name" value="tRNA_Ile_lys_synt_N"/>
</dbReference>
<dbReference type="InterPro" id="IPR015262">
    <property type="entry name" value="tRNA_Ile_lys_synt_subst-bd"/>
</dbReference>
<dbReference type="NCBIfam" id="TIGR02432">
    <property type="entry name" value="lysidine_TilS_N"/>
    <property type="match status" value="1"/>
</dbReference>
<dbReference type="PANTHER" id="PTHR43033">
    <property type="entry name" value="TRNA(ILE)-LYSIDINE SYNTHASE-RELATED"/>
    <property type="match status" value="1"/>
</dbReference>
<dbReference type="PANTHER" id="PTHR43033:SF1">
    <property type="entry name" value="TRNA(ILE)-LYSIDINE SYNTHASE-RELATED"/>
    <property type="match status" value="1"/>
</dbReference>
<dbReference type="Pfam" id="PF01171">
    <property type="entry name" value="ATP_bind_3"/>
    <property type="match status" value="1"/>
</dbReference>
<dbReference type="Pfam" id="PF09179">
    <property type="entry name" value="TilS"/>
    <property type="match status" value="1"/>
</dbReference>
<dbReference type="SUPFAM" id="SSF52402">
    <property type="entry name" value="Adenine nucleotide alpha hydrolases-like"/>
    <property type="match status" value="1"/>
</dbReference>
<dbReference type="SUPFAM" id="SSF82829">
    <property type="entry name" value="MesJ substrate recognition domain-like"/>
    <property type="match status" value="1"/>
</dbReference>
<organism>
    <name type="scientific">Psychrobacter sp. (strain PRwf-1)</name>
    <dbReference type="NCBI Taxonomy" id="349106"/>
    <lineage>
        <taxon>Bacteria</taxon>
        <taxon>Pseudomonadati</taxon>
        <taxon>Pseudomonadota</taxon>
        <taxon>Gammaproteobacteria</taxon>
        <taxon>Moraxellales</taxon>
        <taxon>Moraxellaceae</taxon>
        <taxon>Psychrobacter</taxon>
    </lineage>
</organism>
<protein>
    <recommendedName>
        <fullName evidence="1">tRNA(Ile)-lysidine synthase</fullName>
        <ecNumber evidence="1">6.3.4.19</ecNumber>
    </recommendedName>
    <alternativeName>
        <fullName evidence="1">tRNA(Ile)-2-lysyl-cytidine synthase</fullName>
    </alternativeName>
    <alternativeName>
        <fullName evidence="1">tRNA(Ile)-lysidine synthetase</fullName>
    </alternativeName>
</protein>
<feature type="chain" id="PRO_1000073075" description="tRNA(Ile)-lysidine synthase">
    <location>
        <begin position="1"/>
        <end position="525"/>
    </location>
</feature>
<feature type="binding site" evidence="1">
    <location>
        <begin position="32"/>
        <end position="37"/>
    </location>
    <ligand>
        <name>ATP</name>
        <dbReference type="ChEBI" id="CHEBI:30616"/>
    </ligand>
</feature>
<comment type="function">
    <text evidence="1">Ligates lysine onto the cytidine present at position 34 of the AUA codon-specific tRNA(Ile) that contains the anticodon CAU, in an ATP-dependent manner. Cytidine is converted to lysidine, thus changing the amino acid specificity of the tRNA from methionine to isoleucine.</text>
</comment>
<comment type="catalytic activity">
    <reaction evidence="1">
        <text>cytidine(34) in tRNA(Ile2) + L-lysine + ATP = lysidine(34) in tRNA(Ile2) + AMP + diphosphate + H(+)</text>
        <dbReference type="Rhea" id="RHEA:43744"/>
        <dbReference type="Rhea" id="RHEA-COMP:10625"/>
        <dbReference type="Rhea" id="RHEA-COMP:10670"/>
        <dbReference type="ChEBI" id="CHEBI:15378"/>
        <dbReference type="ChEBI" id="CHEBI:30616"/>
        <dbReference type="ChEBI" id="CHEBI:32551"/>
        <dbReference type="ChEBI" id="CHEBI:33019"/>
        <dbReference type="ChEBI" id="CHEBI:82748"/>
        <dbReference type="ChEBI" id="CHEBI:83665"/>
        <dbReference type="ChEBI" id="CHEBI:456215"/>
        <dbReference type="EC" id="6.3.4.19"/>
    </reaction>
</comment>
<comment type="subcellular location">
    <subcellularLocation>
        <location evidence="1">Cytoplasm</location>
    </subcellularLocation>
</comment>
<comment type="domain">
    <text>The N-terminal region contains the highly conserved SGGXDS motif, predicted to be a P-loop motif involved in ATP binding.</text>
</comment>
<comment type="similarity">
    <text evidence="1">Belongs to the tRNA(Ile)-lysidine synthase family.</text>
</comment>
<keyword id="KW-0067">ATP-binding</keyword>
<keyword id="KW-0963">Cytoplasm</keyword>
<keyword id="KW-0436">Ligase</keyword>
<keyword id="KW-0547">Nucleotide-binding</keyword>
<keyword id="KW-0819">tRNA processing</keyword>
<accession>A5WCA0</accession>
<evidence type="ECO:0000255" key="1">
    <source>
        <dbReference type="HAMAP-Rule" id="MF_01161"/>
    </source>
</evidence>
<gene>
    <name evidence="1" type="primary">tilS</name>
    <name type="ordered locus">PsycPRwf_0336</name>
</gene>